<proteinExistence type="inferred from homology"/>
<reference key="1">
    <citation type="journal article" date="2005" name="Nat. Biotechnol.">
        <title>Complete genome sequence of the plant commensal Pseudomonas fluorescens Pf-5.</title>
        <authorList>
            <person name="Paulsen I.T."/>
            <person name="Press C.M."/>
            <person name="Ravel J."/>
            <person name="Kobayashi D.Y."/>
            <person name="Myers G.S.A."/>
            <person name="Mavrodi D.V."/>
            <person name="DeBoy R.T."/>
            <person name="Seshadri R."/>
            <person name="Ren Q."/>
            <person name="Madupu R."/>
            <person name="Dodson R.J."/>
            <person name="Durkin A.S."/>
            <person name="Brinkac L.M."/>
            <person name="Daugherty S.C."/>
            <person name="Sullivan S.A."/>
            <person name="Rosovitz M.J."/>
            <person name="Gwinn M.L."/>
            <person name="Zhou L."/>
            <person name="Schneider D.J."/>
            <person name="Cartinhour S.W."/>
            <person name="Nelson W.C."/>
            <person name="Weidman J."/>
            <person name="Watkins K."/>
            <person name="Tran K."/>
            <person name="Khouri H."/>
            <person name="Pierson E.A."/>
            <person name="Pierson L.S. III"/>
            <person name="Thomashow L.S."/>
            <person name="Loper J.E."/>
        </authorList>
    </citation>
    <scope>NUCLEOTIDE SEQUENCE [LARGE SCALE GENOMIC DNA]</scope>
    <source>
        <strain>ATCC BAA-477 / NRRL B-23932 / Pf-5</strain>
    </source>
</reference>
<feature type="chain" id="PRO_0000224979" description="Small ribosomal subunit protein bS20">
    <location>
        <begin position="1"/>
        <end position="92"/>
    </location>
</feature>
<feature type="region of interest" description="Disordered" evidence="2">
    <location>
        <begin position="1"/>
        <end position="23"/>
    </location>
</feature>
<feature type="compositionally biased region" description="Basic residues" evidence="2">
    <location>
        <begin position="7"/>
        <end position="20"/>
    </location>
</feature>
<sequence length="92" mass="10025">MANSPSAKKRAKQAEKRRSHNASLRSMVRTYIKNVVKAIDAKDAEKAQAAYVLAVPVIDRMADKGIIHKNKAARHKGRLNGHIKALNLAAAA</sequence>
<dbReference type="EMBL" id="CP000076">
    <property type="protein sequence ID" value="AAY94534.1"/>
    <property type="molecule type" value="Genomic_DNA"/>
</dbReference>
<dbReference type="RefSeq" id="WP_007924739.1">
    <property type="nucleotide sequence ID" value="NC_004129.6"/>
</dbReference>
<dbReference type="SMR" id="Q4K5U1"/>
<dbReference type="STRING" id="220664.PFL_5324"/>
<dbReference type="GeneID" id="93405926"/>
<dbReference type="KEGG" id="pfl:PFL_5324"/>
<dbReference type="eggNOG" id="COG0268">
    <property type="taxonomic scope" value="Bacteria"/>
</dbReference>
<dbReference type="HOGENOM" id="CLU_160655_4_0_6"/>
<dbReference type="Proteomes" id="UP000008540">
    <property type="component" value="Chromosome"/>
</dbReference>
<dbReference type="GO" id="GO:0005829">
    <property type="term" value="C:cytosol"/>
    <property type="evidence" value="ECO:0007669"/>
    <property type="project" value="TreeGrafter"/>
</dbReference>
<dbReference type="GO" id="GO:0015935">
    <property type="term" value="C:small ribosomal subunit"/>
    <property type="evidence" value="ECO:0007669"/>
    <property type="project" value="TreeGrafter"/>
</dbReference>
<dbReference type="GO" id="GO:0070181">
    <property type="term" value="F:small ribosomal subunit rRNA binding"/>
    <property type="evidence" value="ECO:0007669"/>
    <property type="project" value="TreeGrafter"/>
</dbReference>
<dbReference type="GO" id="GO:0003735">
    <property type="term" value="F:structural constituent of ribosome"/>
    <property type="evidence" value="ECO:0007669"/>
    <property type="project" value="InterPro"/>
</dbReference>
<dbReference type="GO" id="GO:0006412">
    <property type="term" value="P:translation"/>
    <property type="evidence" value="ECO:0007669"/>
    <property type="project" value="UniProtKB-UniRule"/>
</dbReference>
<dbReference type="FunFam" id="1.20.58.110:FF:000001">
    <property type="entry name" value="30S ribosomal protein S20"/>
    <property type="match status" value="1"/>
</dbReference>
<dbReference type="Gene3D" id="1.20.58.110">
    <property type="entry name" value="Ribosomal protein S20"/>
    <property type="match status" value="1"/>
</dbReference>
<dbReference type="HAMAP" id="MF_00500">
    <property type="entry name" value="Ribosomal_bS20"/>
    <property type="match status" value="1"/>
</dbReference>
<dbReference type="InterPro" id="IPR002583">
    <property type="entry name" value="Ribosomal_bS20"/>
</dbReference>
<dbReference type="InterPro" id="IPR036510">
    <property type="entry name" value="Ribosomal_bS20_sf"/>
</dbReference>
<dbReference type="NCBIfam" id="TIGR00029">
    <property type="entry name" value="S20"/>
    <property type="match status" value="1"/>
</dbReference>
<dbReference type="PANTHER" id="PTHR33398">
    <property type="entry name" value="30S RIBOSOMAL PROTEIN S20"/>
    <property type="match status" value="1"/>
</dbReference>
<dbReference type="PANTHER" id="PTHR33398:SF1">
    <property type="entry name" value="SMALL RIBOSOMAL SUBUNIT PROTEIN BS20C"/>
    <property type="match status" value="1"/>
</dbReference>
<dbReference type="Pfam" id="PF01649">
    <property type="entry name" value="Ribosomal_S20p"/>
    <property type="match status" value="1"/>
</dbReference>
<dbReference type="SUPFAM" id="SSF46992">
    <property type="entry name" value="Ribosomal protein S20"/>
    <property type="match status" value="1"/>
</dbReference>
<accession>Q4K5U1</accession>
<keyword id="KW-0687">Ribonucleoprotein</keyword>
<keyword id="KW-0689">Ribosomal protein</keyword>
<keyword id="KW-0694">RNA-binding</keyword>
<keyword id="KW-0699">rRNA-binding</keyword>
<comment type="function">
    <text evidence="1">Binds directly to 16S ribosomal RNA.</text>
</comment>
<comment type="similarity">
    <text evidence="1">Belongs to the bacterial ribosomal protein bS20 family.</text>
</comment>
<protein>
    <recommendedName>
        <fullName evidence="1">Small ribosomal subunit protein bS20</fullName>
    </recommendedName>
    <alternativeName>
        <fullName evidence="3">30S ribosomal protein S20</fullName>
    </alternativeName>
</protein>
<gene>
    <name evidence="1" type="primary">rpsT</name>
    <name type="ordered locus">PFL_5324</name>
</gene>
<organism>
    <name type="scientific">Pseudomonas fluorescens (strain ATCC BAA-477 / NRRL B-23932 / Pf-5)</name>
    <dbReference type="NCBI Taxonomy" id="220664"/>
    <lineage>
        <taxon>Bacteria</taxon>
        <taxon>Pseudomonadati</taxon>
        <taxon>Pseudomonadota</taxon>
        <taxon>Gammaproteobacteria</taxon>
        <taxon>Pseudomonadales</taxon>
        <taxon>Pseudomonadaceae</taxon>
        <taxon>Pseudomonas</taxon>
    </lineage>
</organism>
<name>RS20_PSEF5</name>
<evidence type="ECO:0000255" key="1">
    <source>
        <dbReference type="HAMAP-Rule" id="MF_00500"/>
    </source>
</evidence>
<evidence type="ECO:0000256" key="2">
    <source>
        <dbReference type="SAM" id="MobiDB-lite"/>
    </source>
</evidence>
<evidence type="ECO:0000305" key="3"/>